<proteinExistence type="inferred from homology"/>
<organism>
    <name type="scientific">Mycolicibacterium paratuberculosis (strain ATCC BAA-968 / K-10)</name>
    <name type="common">Mycobacterium paratuberculosis</name>
    <dbReference type="NCBI Taxonomy" id="262316"/>
    <lineage>
        <taxon>Bacteria</taxon>
        <taxon>Bacillati</taxon>
        <taxon>Actinomycetota</taxon>
        <taxon>Actinomycetes</taxon>
        <taxon>Mycobacteriales</taxon>
        <taxon>Mycobacteriaceae</taxon>
        <taxon>Mycobacterium</taxon>
        <taxon>Mycobacterium avium complex (MAC)</taxon>
    </lineage>
</organism>
<evidence type="ECO:0000255" key="1">
    <source>
        <dbReference type="HAMAP-Rule" id="MF_00316"/>
    </source>
</evidence>
<accession>Q73XN4</accession>
<reference key="1">
    <citation type="journal article" date="2005" name="Proc. Natl. Acad. Sci. U.S.A.">
        <title>The complete genome sequence of Mycobacterium avium subspecies paratuberculosis.</title>
        <authorList>
            <person name="Li L."/>
            <person name="Bannantine J.P."/>
            <person name="Zhang Q."/>
            <person name="Amonsin A."/>
            <person name="May B.J."/>
            <person name="Alt D."/>
            <person name="Banerji N."/>
            <person name="Kanjilal S."/>
            <person name="Kapur V."/>
        </authorList>
    </citation>
    <scope>NUCLEOTIDE SEQUENCE [LARGE SCALE GENOMIC DNA]</scope>
    <source>
        <strain>ATCC BAA-968 / K-10</strain>
    </source>
</reference>
<sequence length="197" mass="21067">MADSMQLAGIVLAGGESRRMGRDKATLPGPRGAATLLEYVVGVLIQRCDPIFVMAAPGQPLPEVTARIIRDEIRGQGPLPATGRGLRAAAEAGARYAFVCAVDMPLLSPELIDDLVHLATETNAEVVLPWDGRSHYLASLYRTDLAERIDRLVAGGARSMRALIDASDAQQIVLPESRFLANVNTEADLRALAQARA</sequence>
<protein>
    <recommendedName>
        <fullName evidence="1">Probable molybdenum cofactor guanylyltransferase</fullName>
        <shortName evidence="1">MoCo guanylyltransferase</shortName>
        <ecNumber evidence="1">2.7.7.77</ecNumber>
    </recommendedName>
    <alternativeName>
        <fullName evidence="1">GTP:molybdopterin guanylyltransferase</fullName>
    </alternativeName>
    <alternativeName>
        <fullName evidence="1">Mo-MPT guanylyltransferase</fullName>
    </alternativeName>
    <alternativeName>
        <fullName evidence="1">Molybdopterin guanylyltransferase</fullName>
    </alternativeName>
    <alternativeName>
        <fullName evidence="1">Molybdopterin-guanine dinucleotide synthase</fullName>
        <shortName evidence="1">MGD synthase</shortName>
    </alternativeName>
</protein>
<dbReference type="EC" id="2.7.7.77" evidence="1"/>
<dbReference type="EMBL" id="AE016958">
    <property type="protein sequence ID" value="AAS04592.1"/>
    <property type="molecule type" value="Genomic_DNA"/>
</dbReference>
<dbReference type="SMR" id="Q73XN4"/>
<dbReference type="STRING" id="262316.MAP_2275c"/>
<dbReference type="KEGG" id="mpa:MAP_2275c"/>
<dbReference type="eggNOG" id="COG0746">
    <property type="taxonomic scope" value="Bacteria"/>
</dbReference>
<dbReference type="HOGENOM" id="CLU_055597_3_2_11"/>
<dbReference type="Proteomes" id="UP000000580">
    <property type="component" value="Chromosome"/>
</dbReference>
<dbReference type="GO" id="GO:0005737">
    <property type="term" value="C:cytoplasm"/>
    <property type="evidence" value="ECO:0007669"/>
    <property type="project" value="UniProtKB-SubCell"/>
</dbReference>
<dbReference type="GO" id="GO:0005525">
    <property type="term" value="F:GTP binding"/>
    <property type="evidence" value="ECO:0007669"/>
    <property type="project" value="UniProtKB-UniRule"/>
</dbReference>
<dbReference type="GO" id="GO:0046872">
    <property type="term" value="F:metal ion binding"/>
    <property type="evidence" value="ECO:0007669"/>
    <property type="project" value="UniProtKB-KW"/>
</dbReference>
<dbReference type="GO" id="GO:0061603">
    <property type="term" value="F:molybdenum cofactor guanylyltransferase activity"/>
    <property type="evidence" value="ECO:0007669"/>
    <property type="project" value="UniProtKB-EC"/>
</dbReference>
<dbReference type="GO" id="GO:0006777">
    <property type="term" value="P:Mo-molybdopterin cofactor biosynthetic process"/>
    <property type="evidence" value="ECO:0007669"/>
    <property type="project" value="UniProtKB-KW"/>
</dbReference>
<dbReference type="CDD" id="cd02503">
    <property type="entry name" value="MobA"/>
    <property type="match status" value="1"/>
</dbReference>
<dbReference type="Gene3D" id="3.90.550.10">
    <property type="entry name" value="Spore Coat Polysaccharide Biosynthesis Protein SpsA, Chain A"/>
    <property type="match status" value="1"/>
</dbReference>
<dbReference type="HAMAP" id="MF_00316">
    <property type="entry name" value="MobA"/>
    <property type="match status" value="1"/>
</dbReference>
<dbReference type="InterPro" id="IPR025877">
    <property type="entry name" value="MobA-like_NTP_Trfase"/>
</dbReference>
<dbReference type="InterPro" id="IPR013482">
    <property type="entry name" value="Molybde_CF_guanTrfase"/>
</dbReference>
<dbReference type="InterPro" id="IPR029044">
    <property type="entry name" value="Nucleotide-diphossugar_trans"/>
</dbReference>
<dbReference type="NCBIfam" id="NF001855">
    <property type="entry name" value="PRK00576.1"/>
    <property type="match status" value="1"/>
</dbReference>
<dbReference type="PANTHER" id="PTHR19136">
    <property type="entry name" value="MOLYBDENUM COFACTOR GUANYLYLTRANSFERASE"/>
    <property type="match status" value="1"/>
</dbReference>
<dbReference type="PANTHER" id="PTHR19136:SF81">
    <property type="entry name" value="MOLYBDENUM COFACTOR GUANYLYLTRANSFERASE"/>
    <property type="match status" value="1"/>
</dbReference>
<dbReference type="Pfam" id="PF12804">
    <property type="entry name" value="NTP_transf_3"/>
    <property type="match status" value="1"/>
</dbReference>
<dbReference type="SUPFAM" id="SSF53448">
    <property type="entry name" value="Nucleotide-diphospho-sugar transferases"/>
    <property type="match status" value="1"/>
</dbReference>
<name>MOBA_MYCPA</name>
<gene>
    <name evidence="1" type="primary">mobA</name>
    <name type="ordered locus">MAP_2275c</name>
</gene>
<keyword id="KW-0963">Cytoplasm</keyword>
<keyword id="KW-0342">GTP-binding</keyword>
<keyword id="KW-0460">Magnesium</keyword>
<keyword id="KW-0479">Metal-binding</keyword>
<keyword id="KW-0501">Molybdenum cofactor biosynthesis</keyword>
<keyword id="KW-0547">Nucleotide-binding</keyword>
<keyword id="KW-1185">Reference proteome</keyword>
<keyword id="KW-0808">Transferase</keyword>
<comment type="function">
    <text evidence="1">Transfers a GMP moiety from GTP to Mo-molybdopterin (Mo-MPT) cofactor (Moco or molybdenum cofactor) to form Mo-molybdopterin guanine dinucleotide (Mo-MGD) cofactor.</text>
</comment>
<comment type="catalytic activity">
    <reaction evidence="1">
        <text>Mo-molybdopterin + GTP + H(+) = Mo-molybdopterin guanine dinucleotide + diphosphate</text>
        <dbReference type="Rhea" id="RHEA:34243"/>
        <dbReference type="ChEBI" id="CHEBI:15378"/>
        <dbReference type="ChEBI" id="CHEBI:33019"/>
        <dbReference type="ChEBI" id="CHEBI:37565"/>
        <dbReference type="ChEBI" id="CHEBI:71302"/>
        <dbReference type="ChEBI" id="CHEBI:71310"/>
        <dbReference type="EC" id="2.7.7.77"/>
    </reaction>
</comment>
<comment type="cofactor">
    <cofactor evidence="1">
        <name>Mg(2+)</name>
        <dbReference type="ChEBI" id="CHEBI:18420"/>
    </cofactor>
</comment>
<comment type="subcellular location">
    <subcellularLocation>
        <location evidence="1">Cytoplasm</location>
    </subcellularLocation>
</comment>
<comment type="domain">
    <text evidence="1">The N-terminal domain determines nucleotide recognition and specific binding, while the C-terminal domain determines the specific binding to the target protein.</text>
</comment>
<comment type="similarity">
    <text evidence="1">Belongs to the MobA family.</text>
</comment>
<feature type="chain" id="PRO_1000115802" description="Probable molybdenum cofactor guanylyltransferase">
    <location>
        <begin position="1"/>
        <end position="197"/>
    </location>
</feature>
<feature type="binding site" evidence="1">
    <location>
        <begin position="12"/>
        <end position="14"/>
    </location>
    <ligand>
        <name>GTP</name>
        <dbReference type="ChEBI" id="CHEBI:37565"/>
    </ligand>
</feature>
<feature type="binding site" evidence="1">
    <location>
        <position position="24"/>
    </location>
    <ligand>
        <name>GTP</name>
        <dbReference type="ChEBI" id="CHEBI:37565"/>
    </ligand>
</feature>
<feature type="binding site" evidence="1">
    <location>
        <position position="71"/>
    </location>
    <ligand>
        <name>GTP</name>
        <dbReference type="ChEBI" id="CHEBI:37565"/>
    </ligand>
</feature>
<feature type="binding site" evidence="1">
    <location>
        <position position="103"/>
    </location>
    <ligand>
        <name>GTP</name>
        <dbReference type="ChEBI" id="CHEBI:37565"/>
    </ligand>
</feature>
<feature type="binding site" evidence="1">
    <location>
        <position position="103"/>
    </location>
    <ligand>
        <name>Mg(2+)</name>
        <dbReference type="ChEBI" id="CHEBI:18420"/>
    </ligand>
</feature>